<protein>
    <recommendedName>
        <fullName evidence="1">Cysteine--tRNA ligase</fullName>
        <ecNumber evidence="1">6.1.1.16</ecNumber>
    </recommendedName>
    <alternativeName>
        <fullName evidence="1">Cysteinyl-tRNA synthetase</fullName>
        <shortName evidence="1">CysRS</shortName>
    </alternativeName>
</protein>
<gene>
    <name evidence="1" type="primary">cysS</name>
    <name type="ordered locus">SF0457</name>
    <name type="ordered locus">S0465</name>
</gene>
<comment type="catalytic activity">
    <reaction evidence="1">
        <text>tRNA(Cys) + L-cysteine + ATP = L-cysteinyl-tRNA(Cys) + AMP + diphosphate</text>
        <dbReference type="Rhea" id="RHEA:17773"/>
        <dbReference type="Rhea" id="RHEA-COMP:9661"/>
        <dbReference type="Rhea" id="RHEA-COMP:9679"/>
        <dbReference type="ChEBI" id="CHEBI:30616"/>
        <dbReference type="ChEBI" id="CHEBI:33019"/>
        <dbReference type="ChEBI" id="CHEBI:35235"/>
        <dbReference type="ChEBI" id="CHEBI:78442"/>
        <dbReference type="ChEBI" id="CHEBI:78517"/>
        <dbReference type="ChEBI" id="CHEBI:456215"/>
        <dbReference type="EC" id="6.1.1.16"/>
    </reaction>
</comment>
<comment type="cofactor">
    <cofactor evidence="1">
        <name>Zn(2+)</name>
        <dbReference type="ChEBI" id="CHEBI:29105"/>
    </cofactor>
    <text evidence="1">Binds 1 zinc ion per subunit.</text>
</comment>
<comment type="subunit">
    <text evidence="1">Monomer.</text>
</comment>
<comment type="subcellular location">
    <subcellularLocation>
        <location evidence="1">Cytoplasm</location>
    </subcellularLocation>
</comment>
<comment type="similarity">
    <text evidence="1">Belongs to the class-I aminoacyl-tRNA synthetase family.</text>
</comment>
<dbReference type="EC" id="6.1.1.16" evidence="1"/>
<dbReference type="EMBL" id="AE005674">
    <property type="protein sequence ID" value="AAN42111.1"/>
    <property type="molecule type" value="Genomic_DNA"/>
</dbReference>
<dbReference type="EMBL" id="AE014073">
    <property type="protein sequence ID" value="AAP15987.1"/>
    <property type="molecule type" value="Genomic_DNA"/>
</dbReference>
<dbReference type="RefSeq" id="NP_706404.1">
    <property type="nucleotide sequence ID" value="NC_004337.2"/>
</dbReference>
<dbReference type="RefSeq" id="WP_000912357.1">
    <property type="nucleotide sequence ID" value="NZ_QWTR01000111.1"/>
</dbReference>
<dbReference type="SMR" id="Q83M27"/>
<dbReference type="STRING" id="198214.SF0457"/>
<dbReference type="PaxDb" id="198214-SF0457"/>
<dbReference type="GeneID" id="1023360"/>
<dbReference type="KEGG" id="sfl:SF0457"/>
<dbReference type="KEGG" id="sfx:S0465"/>
<dbReference type="PATRIC" id="fig|198214.7.peg.523"/>
<dbReference type="HOGENOM" id="CLU_013528_0_1_6"/>
<dbReference type="Proteomes" id="UP000001006">
    <property type="component" value="Chromosome"/>
</dbReference>
<dbReference type="Proteomes" id="UP000002673">
    <property type="component" value="Chromosome"/>
</dbReference>
<dbReference type="GO" id="GO:0005829">
    <property type="term" value="C:cytosol"/>
    <property type="evidence" value="ECO:0007669"/>
    <property type="project" value="TreeGrafter"/>
</dbReference>
<dbReference type="GO" id="GO:0005524">
    <property type="term" value="F:ATP binding"/>
    <property type="evidence" value="ECO:0007669"/>
    <property type="project" value="UniProtKB-UniRule"/>
</dbReference>
<dbReference type="GO" id="GO:0004817">
    <property type="term" value="F:cysteine-tRNA ligase activity"/>
    <property type="evidence" value="ECO:0007669"/>
    <property type="project" value="UniProtKB-UniRule"/>
</dbReference>
<dbReference type="GO" id="GO:0008270">
    <property type="term" value="F:zinc ion binding"/>
    <property type="evidence" value="ECO:0007669"/>
    <property type="project" value="UniProtKB-UniRule"/>
</dbReference>
<dbReference type="GO" id="GO:0006423">
    <property type="term" value="P:cysteinyl-tRNA aminoacylation"/>
    <property type="evidence" value="ECO:0007669"/>
    <property type="project" value="UniProtKB-UniRule"/>
</dbReference>
<dbReference type="CDD" id="cd07963">
    <property type="entry name" value="Anticodon_Ia_Cys"/>
    <property type="match status" value="1"/>
</dbReference>
<dbReference type="CDD" id="cd00672">
    <property type="entry name" value="CysRS_core"/>
    <property type="match status" value="1"/>
</dbReference>
<dbReference type="FunFam" id="1.20.120.1910:FF:000001">
    <property type="entry name" value="Cysteine--tRNA ligase"/>
    <property type="match status" value="1"/>
</dbReference>
<dbReference type="FunFam" id="3.40.50.620:FF:000009">
    <property type="entry name" value="Cysteine--tRNA ligase"/>
    <property type="match status" value="1"/>
</dbReference>
<dbReference type="Gene3D" id="1.20.120.1910">
    <property type="entry name" value="Cysteine-tRNA ligase, C-terminal anti-codon recognition domain"/>
    <property type="match status" value="1"/>
</dbReference>
<dbReference type="Gene3D" id="3.40.50.620">
    <property type="entry name" value="HUPs"/>
    <property type="match status" value="1"/>
</dbReference>
<dbReference type="HAMAP" id="MF_00041">
    <property type="entry name" value="Cys_tRNA_synth"/>
    <property type="match status" value="1"/>
</dbReference>
<dbReference type="InterPro" id="IPR015803">
    <property type="entry name" value="Cys-tRNA-ligase"/>
</dbReference>
<dbReference type="InterPro" id="IPR015273">
    <property type="entry name" value="Cys-tRNA-synt_Ia_DALR"/>
</dbReference>
<dbReference type="InterPro" id="IPR024909">
    <property type="entry name" value="Cys-tRNA/MSH_ligase"/>
</dbReference>
<dbReference type="InterPro" id="IPR056411">
    <property type="entry name" value="CysS_C"/>
</dbReference>
<dbReference type="InterPro" id="IPR014729">
    <property type="entry name" value="Rossmann-like_a/b/a_fold"/>
</dbReference>
<dbReference type="InterPro" id="IPR032678">
    <property type="entry name" value="tRNA-synt_1_cat_dom"/>
</dbReference>
<dbReference type="InterPro" id="IPR009080">
    <property type="entry name" value="tRNAsynth_Ia_anticodon-bd"/>
</dbReference>
<dbReference type="NCBIfam" id="TIGR00435">
    <property type="entry name" value="cysS"/>
    <property type="match status" value="1"/>
</dbReference>
<dbReference type="PANTHER" id="PTHR10890:SF3">
    <property type="entry name" value="CYSTEINE--TRNA LIGASE, CYTOPLASMIC"/>
    <property type="match status" value="1"/>
</dbReference>
<dbReference type="PANTHER" id="PTHR10890">
    <property type="entry name" value="CYSTEINYL-TRNA SYNTHETASE"/>
    <property type="match status" value="1"/>
</dbReference>
<dbReference type="Pfam" id="PF23493">
    <property type="entry name" value="CysS_C"/>
    <property type="match status" value="1"/>
</dbReference>
<dbReference type="Pfam" id="PF09190">
    <property type="entry name" value="DALR_2"/>
    <property type="match status" value="1"/>
</dbReference>
<dbReference type="Pfam" id="PF01406">
    <property type="entry name" value="tRNA-synt_1e"/>
    <property type="match status" value="1"/>
</dbReference>
<dbReference type="PRINTS" id="PR00983">
    <property type="entry name" value="TRNASYNTHCYS"/>
</dbReference>
<dbReference type="SMART" id="SM00840">
    <property type="entry name" value="DALR_2"/>
    <property type="match status" value="1"/>
</dbReference>
<dbReference type="SUPFAM" id="SSF47323">
    <property type="entry name" value="Anticodon-binding domain of a subclass of class I aminoacyl-tRNA synthetases"/>
    <property type="match status" value="1"/>
</dbReference>
<dbReference type="SUPFAM" id="SSF52374">
    <property type="entry name" value="Nucleotidylyl transferase"/>
    <property type="match status" value="1"/>
</dbReference>
<proteinExistence type="inferred from homology"/>
<evidence type="ECO:0000255" key="1">
    <source>
        <dbReference type="HAMAP-Rule" id="MF_00041"/>
    </source>
</evidence>
<accession>Q83M27</accession>
<accession>Q7C2U7</accession>
<keyword id="KW-0030">Aminoacyl-tRNA synthetase</keyword>
<keyword id="KW-0067">ATP-binding</keyword>
<keyword id="KW-0963">Cytoplasm</keyword>
<keyword id="KW-0436">Ligase</keyword>
<keyword id="KW-0479">Metal-binding</keyword>
<keyword id="KW-0547">Nucleotide-binding</keyword>
<keyword id="KW-0648">Protein biosynthesis</keyword>
<keyword id="KW-1185">Reference proteome</keyword>
<keyword id="KW-0862">Zinc</keyword>
<reference key="1">
    <citation type="journal article" date="2002" name="Nucleic Acids Res.">
        <title>Genome sequence of Shigella flexneri 2a: insights into pathogenicity through comparison with genomes of Escherichia coli K12 and O157.</title>
        <authorList>
            <person name="Jin Q."/>
            <person name="Yuan Z."/>
            <person name="Xu J."/>
            <person name="Wang Y."/>
            <person name="Shen Y."/>
            <person name="Lu W."/>
            <person name="Wang J."/>
            <person name="Liu H."/>
            <person name="Yang J."/>
            <person name="Yang F."/>
            <person name="Zhang X."/>
            <person name="Zhang J."/>
            <person name="Yang G."/>
            <person name="Wu H."/>
            <person name="Qu D."/>
            <person name="Dong J."/>
            <person name="Sun L."/>
            <person name="Xue Y."/>
            <person name="Zhao A."/>
            <person name="Gao Y."/>
            <person name="Zhu J."/>
            <person name="Kan B."/>
            <person name="Ding K."/>
            <person name="Chen S."/>
            <person name="Cheng H."/>
            <person name="Yao Z."/>
            <person name="He B."/>
            <person name="Chen R."/>
            <person name="Ma D."/>
            <person name="Qiang B."/>
            <person name="Wen Y."/>
            <person name="Hou Y."/>
            <person name="Yu J."/>
        </authorList>
    </citation>
    <scope>NUCLEOTIDE SEQUENCE [LARGE SCALE GENOMIC DNA]</scope>
    <source>
        <strain>301 / Serotype 2a</strain>
    </source>
</reference>
<reference key="2">
    <citation type="journal article" date="2003" name="Infect. Immun.">
        <title>Complete genome sequence and comparative genomics of Shigella flexneri serotype 2a strain 2457T.</title>
        <authorList>
            <person name="Wei J."/>
            <person name="Goldberg M.B."/>
            <person name="Burland V."/>
            <person name="Venkatesan M.M."/>
            <person name="Deng W."/>
            <person name="Fournier G."/>
            <person name="Mayhew G.F."/>
            <person name="Plunkett G. III"/>
            <person name="Rose D.J."/>
            <person name="Darling A."/>
            <person name="Mau B."/>
            <person name="Perna N.T."/>
            <person name="Payne S.M."/>
            <person name="Runyen-Janecky L.J."/>
            <person name="Zhou S."/>
            <person name="Schwartz D.C."/>
            <person name="Blattner F.R."/>
        </authorList>
    </citation>
    <scope>NUCLEOTIDE SEQUENCE [LARGE SCALE GENOMIC DNA]</scope>
    <source>
        <strain>ATCC 700930 / 2457T / Serotype 2a</strain>
    </source>
</reference>
<sequence>MLKIFNTLTRQKEEFKPIHAGEVGMYVCGITVYDLCHIGHGRTFVAFDVVARYLRFLGYKLKYVRNITDIDDKIIKRANENGESFVALVDRMIAEMHKDFDALNILRPDMEPRATHHIAEIIELTEQLIAKGHAYVADNGDVMFDVPTDPTYGVLSRQDLDQLQAGARVDVVDDKRNRMDFVLWKMSKEGEPSWPSPWGAGRPGWHIECSAMNCKQLGNHFDIHGGGSDLMFPHHENEIAQSTCAHDGQYVNYWMHSGMVMVDREKMSKSLGNFFTVRDVLKYYDAETVRYFLMSGHYRSQLNYSEENLKQARAALERLYTALRGTDKTVAPAGGEAFEARFIEAMDDDFNTPEAYSVLFDMAREVNRLKAEDMAAANAMASHLRKLSAVLGLLEQEPEAFLQSGAQADDSEVAEIEALIQQRLDARKAKDWAAADAARDRLNEMGIVLEDGPQGTTWRRK</sequence>
<feature type="chain" id="PRO_0000159475" description="Cysteine--tRNA ligase">
    <location>
        <begin position="1"/>
        <end position="461"/>
    </location>
</feature>
<feature type="short sequence motif" description="'HIGH' region">
    <location>
        <begin position="30"/>
        <end position="40"/>
    </location>
</feature>
<feature type="short sequence motif" description="'KMSKS' region">
    <location>
        <begin position="266"/>
        <end position="270"/>
    </location>
</feature>
<feature type="binding site" evidence="1">
    <location>
        <position position="28"/>
    </location>
    <ligand>
        <name>Zn(2+)</name>
        <dbReference type="ChEBI" id="CHEBI:29105"/>
    </ligand>
</feature>
<feature type="binding site" evidence="1">
    <location>
        <position position="209"/>
    </location>
    <ligand>
        <name>Zn(2+)</name>
        <dbReference type="ChEBI" id="CHEBI:29105"/>
    </ligand>
</feature>
<feature type="binding site" evidence="1">
    <location>
        <position position="234"/>
    </location>
    <ligand>
        <name>Zn(2+)</name>
        <dbReference type="ChEBI" id="CHEBI:29105"/>
    </ligand>
</feature>
<feature type="binding site" evidence="1">
    <location>
        <position position="238"/>
    </location>
    <ligand>
        <name>Zn(2+)</name>
        <dbReference type="ChEBI" id="CHEBI:29105"/>
    </ligand>
</feature>
<feature type="binding site" evidence="1">
    <location>
        <position position="269"/>
    </location>
    <ligand>
        <name>ATP</name>
        <dbReference type="ChEBI" id="CHEBI:30616"/>
    </ligand>
</feature>
<name>SYC_SHIFL</name>
<organism>
    <name type="scientific">Shigella flexneri</name>
    <dbReference type="NCBI Taxonomy" id="623"/>
    <lineage>
        <taxon>Bacteria</taxon>
        <taxon>Pseudomonadati</taxon>
        <taxon>Pseudomonadota</taxon>
        <taxon>Gammaproteobacteria</taxon>
        <taxon>Enterobacterales</taxon>
        <taxon>Enterobacteriaceae</taxon>
        <taxon>Shigella</taxon>
    </lineage>
</organism>